<comment type="function">
    <text evidence="2 3 9 12 13 15 16">Serotonin transporter that cotransports serotonin with one Na(+) ion in exchange for one K(+) ion and possibly one proton in an overall electroneutral transport cycle. Transports serotonin across the plasma membrane from the extracellular compartment to the cytosol thus limiting serotonin intercellular signaling (By similarity) (PubMed:9037532, PubMed:9547354). Essential for serotonin homeostasis in the central nervous system. In the developing somatosensory cortex, acts in glutamatergic neurons to control serotonin uptake and its trophic functions accounting for proper spatial organization of cortical neurons and elaboration of sensory circuits. In the mature cortex, acts primarily in brainstem raphe neurons to mediate serotonin uptake from the synaptic cleft back into the pre-synaptic terminal thus terminating serotonin signaling at the synapse (PubMed:25600870, PubMed:9547354). Modulates mucosal serotonin levels in the gastrointestinal tract through uptake and clearance of serotonin in enterocytes. Required for enteric neurogenesis and gastrointestinal reflexes (PubMed:27111230). Regulates blood serotonin levels by ensuring rapid high affinity uptake of serotonin from plasma to platelets, where it is further stored in dense granules via vesicular monoamine transporters and then released upon stimulation (PubMed:18317590). Mechanistically, the transport cycle starts with an outward-open conformation having Na1(+) and Cl(-) sites occupied. The binding of a second extracellular Na2(+) ion and serotonin substrate leads to structural changes to outward-occluded to inward-occluded to inward-open, where the Na2(+) ion and serotonin are released into the cytosol. Binding of intracellular K(+) ion induces conformational transitions to inward-occluded to outward-open and completes the cycle by releasing K(+) possibly together with a proton bound to Asp-98 into the extracellular compartment. Na1(+) and Cl(-) ions remain bound throughout the transport cycle (By similarity) (PubMed:9037532, PubMed:9547354). Additionally, displays serotonin-induced channel-like conductance for monovalent cations, mainly Na(+) ions. The channel activity is uncoupled from the transport cycle and may contribute to the membrane resting potential or excitability (By similarity).</text>
</comment>
<comment type="catalytic activity">
    <reaction evidence="12 16">
        <text>serotonin(out) + K(+)(in) + Na(+)(out) + H(+)(in) = serotonin(in) + K(+)(out) + Na(+)(in) + H(+)(out)</text>
        <dbReference type="Rhea" id="RHEA:75839"/>
        <dbReference type="ChEBI" id="CHEBI:15378"/>
        <dbReference type="ChEBI" id="CHEBI:29101"/>
        <dbReference type="ChEBI" id="CHEBI:29103"/>
        <dbReference type="ChEBI" id="CHEBI:350546"/>
    </reaction>
    <physiologicalReaction direction="left-to-right" evidence="19 20">
        <dbReference type="Rhea" id="RHEA:75840"/>
    </physiologicalReaction>
</comment>
<comment type="biophysicochemical properties">
    <kinetics>
        <KM evidence="15">403 nM for serotonin</KM>
        <Vmax evidence="15">1.02 pmol/min/mg enzyme for serotonin</Vmax>
    </kinetics>
</comment>
<comment type="subunit">
    <text evidence="2 3 7 8 14">Monomer or homooligomer (By similarity). Interacts (via C-terminus) with SCAMP2; the interaction is direct and retains transporter molecules intracellularly. Interacts with filamentous actin and STX1A (By similarity). Interacts (via the N-terminus) with STX1A (via the H3 domain); this interaction regulates SLC4A6 channel conductance (By similarity). Interacts with SEC23A, SEC24C and PATJ. Interacts with NOS1; the interaction may diminish the cell surface localization of SERT in the brain and, correspondingly, reduce serotonin reuptake (PubMed:17452640). Interacts with TGFB1I1 (PubMed:16803896). Interacts with ITGAV:ITGB3 (PubMed:29038237). Interacts (via C-terminus) with ITGB3; this interaction regulates SLC6A4 trafficking (By similarity).</text>
</comment>
<comment type="interaction">
    <interactant intactId="EBI-15633326">
        <id>Q60857</id>
    </interactant>
    <interactant intactId="EBI-397596">
        <id>Q9Z0J4</id>
        <label>Nos1</label>
    </interactant>
    <organismsDiffer>false</organismsDiffer>
    <experiments>4</experiments>
</comment>
<comment type="subcellular location">
    <subcellularLocation>
        <location evidence="2">Cell membrane</location>
        <topology evidence="5">Multi-pass membrane protein</topology>
    </subcellularLocation>
    <subcellularLocation>
        <location evidence="3">Endomembrane system</location>
        <topology evidence="5">Multi-pass membrane protein</topology>
    </subcellularLocation>
    <subcellularLocation>
        <location evidence="3">Endosome membrane</location>
        <topology evidence="5">Multi-pass membrane protein</topology>
    </subcellularLocation>
    <subcellularLocation>
        <location evidence="14">Synapse</location>
    </subcellularLocation>
    <subcellularLocation>
        <location evidence="14">Cell junction</location>
        <location evidence="14">Focal adhesion</location>
    </subcellularLocation>
    <subcellularLocation>
        <location evidence="12">Cell projection</location>
        <location evidence="12">Neuron projection</location>
    </subcellularLocation>
    <text evidence="2 3 14">Could be part of recycling endosomes. Density of transporter molecules on the plasma membrane is itself regulated by STX1A. Density of transporter molecules on the plasma membrane is also regulated by serotonin (By similarity). Density of transporter molecules seems to be modulated by ITGAV:ITGB3 (PubMed:29038237).</text>
</comment>
<comment type="tissue specificity">
    <text evidence="12 15">Expressed in the lung, midbrain and brainstem regions (PubMed:9037532). Expressed in brainstem raphe neurons (PubMed:25600870).</text>
</comment>
<comment type="developmental stage">
    <text evidence="10 12">Expressed in the uncrossed ipsilateral retinal ganglion cells (iRGCs) of the peripheral ventrotemporal (VT) region segment in the retina at 16.5 dpc (PubMed:20676059). Expressed during early postnatal brain development in neurons of brainstem and ventrobasal complex (VB) nuclei, including thalamic VB, dorso-lateral geniculate (DLG) nucleus neurons and hippocampal neurons. Expressed in the somatosensory cortex and the brainstem at postnatal day 7 (at protein level) (PubMed:25600870).</text>
</comment>
<comment type="induction">
    <text evidence="11">Expressed in a circadian manner in the midbrain with a higher level expression seen during the dark phase (at protein level).</text>
</comment>
<comment type="PTM">
    <text evidence="2">Phosphorylation at Thr-276 increases 5-HT uptake and is required for cGMP-mediated SERT regulation.</text>
</comment>
<comment type="disruption phenotype">
    <text evidence="12 13 16">Mutant mice are born at the expected Mendelian rate. Knockdown results in loss of serotonin uptake in synaptosomes of brainstem and cortex, abnormal barrel cortex development, enteric nervous system hyperplasia and reduced peristaltic reflexes.</text>
</comment>
<comment type="miscellaneous">
    <text>This protein is the target of psychomotor stimulants such as amphetamines or cocaine.</text>
</comment>
<comment type="similarity">
    <text evidence="18">Belongs to the sodium:neurotransmitter symporter (SNF) (TC 2.A.22) family. SLC6A4 subfamily.</text>
</comment>
<comment type="sequence caution" evidence="18">
    <conflict type="frameshift">
        <sequence resource="EMBL" id="X66119"/>
    </conflict>
</comment>
<name>SC6A4_MOUSE</name>
<organism>
    <name type="scientific">Mus musculus</name>
    <name type="common">Mouse</name>
    <dbReference type="NCBI Taxonomy" id="10090"/>
    <lineage>
        <taxon>Eukaryota</taxon>
        <taxon>Metazoa</taxon>
        <taxon>Chordata</taxon>
        <taxon>Craniata</taxon>
        <taxon>Vertebrata</taxon>
        <taxon>Euteleostomi</taxon>
        <taxon>Mammalia</taxon>
        <taxon>Eutheria</taxon>
        <taxon>Euarchontoglires</taxon>
        <taxon>Glires</taxon>
        <taxon>Rodentia</taxon>
        <taxon>Myomorpha</taxon>
        <taxon>Muroidea</taxon>
        <taxon>Muridae</taxon>
        <taxon>Murinae</taxon>
        <taxon>Mus</taxon>
        <taxon>Mus</taxon>
    </lineage>
</organism>
<evidence type="ECO:0000250" key="1"/>
<evidence type="ECO:0000250" key="2">
    <source>
        <dbReference type="UniProtKB" id="P31645"/>
    </source>
</evidence>
<evidence type="ECO:0000250" key="3">
    <source>
        <dbReference type="UniProtKB" id="P31652"/>
    </source>
</evidence>
<evidence type="ECO:0000250" key="4">
    <source>
        <dbReference type="UniProtKB" id="Q7K4Y6"/>
    </source>
</evidence>
<evidence type="ECO:0000255" key="5"/>
<evidence type="ECO:0000256" key="6">
    <source>
        <dbReference type="SAM" id="MobiDB-lite"/>
    </source>
</evidence>
<evidence type="ECO:0000269" key="7">
    <source>
    </source>
</evidence>
<evidence type="ECO:0000269" key="8">
    <source>
    </source>
</evidence>
<evidence type="ECO:0000269" key="9">
    <source>
    </source>
</evidence>
<evidence type="ECO:0000269" key="10">
    <source>
    </source>
</evidence>
<evidence type="ECO:0000269" key="11">
    <source>
    </source>
</evidence>
<evidence type="ECO:0000269" key="12">
    <source>
    </source>
</evidence>
<evidence type="ECO:0000269" key="13">
    <source>
    </source>
</evidence>
<evidence type="ECO:0000269" key="14">
    <source>
    </source>
</evidence>
<evidence type="ECO:0000269" key="15">
    <source>
    </source>
</evidence>
<evidence type="ECO:0000269" key="16">
    <source>
    </source>
</evidence>
<evidence type="ECO:0000303" key="17">
    <source>
    </source>
</evidence>
<evidence type="ECO:0000305" key="18"/>
<evidence type="ECO:0000305" key="19">
    <source>
    </source>
</evidence>
<evidence type="ECO:0000305" key="20">
    <source>
    </source>
</evidence>
<evidence type="ECO:0000312" key="21">
    <source>
        <dbReference type="MGI" id="MGI:96285"/>
    </source>
</evidence>
<protein>
    <recommendedName>
        <fullName evidence="18">Sodium-dependent serotonin transporter</fullName>
        <shortName evidence="17">SERT</shortName>
    </recommendedName>
    <alternativeName>
        <fullName>5HT transporter</fullName>
        <shortName>5HTT</shortName>
    </alternativeName>
    <alternativeName>
        <fullName>Solute carrier family 6 member 4</fullName>
    </alternativeName>
</protein>
<sequence>METTPLNSQKVLSECKDKEDCQENGVLQKGVPTPADKAGPGQISNGYSAVPSTSAGDEAPHSTPAATTTLVAEIHQGERETWGKKMDFLLSVIGYAVDLGNIWRFPYICYQNGGGAFLLPYTIMAIFGGIPLFYMELALGQYHRNGCISIWKKICPIFKGIGYAICIIAFYIASYYNTIIAWALYYLISSFTDQLPWTSCKNSWNTGNCTNYFAQDNITWTLHSTSPAEEFYLRHVLQIHQSKGLQDLGTISWQLALCIMLIFTIIYFSIWKGVKTSGKVVWVTATFPYIVLSVLLVRGATLPGAWRGVVFYLKPNWQKLLETGVWVDAAAQIFFSLGPGFGVLLAFASYNKFNNNCYQDALVTSVVNCMTSFVSGFVIFTVLGYMAEMRNEDVSEVAKDAGPSLLFITYAEAIANMPASTFFAIIFFLMLITLGLDSTFAGLEGVITAVLDEFPHIWAKRREWFVLIVVITCILGSLLTLTSGGAYVVTLLEEYATGPAVLTVALIEAVVVSWFYGITQFCSDVKEMLGFSPGWFWRICWVAISPLFLLFIICSFLMSPPQLRLFQYNYPHWSIILGYCIGTSSVICIPIYIIYRLISTPGTLKERIIKSITPETPTEIPCGDIRMNAV</sequence>
<reference key="1">
    <citation type="journal article" date="1996" name="Brain Res. Mol. Brain Res.">
        <title>Cloning and expression of the mouse serotonin transporter.</title>
        <authorList>
            <person name="Chang A.S."/>
            <person name="Chang S.M."/>
            <person name="Starnes D.M."/>
            <person name="Schroeter S."/>
            <person name="Bauman A.L."/>
            <person name="Blakely R.D."/>
        </authorList>
    </citation>
    <scope>NUCLEOTIDE SEQUENCE [MRNA]</scope>
    <scope>FUNCTION</scope>
    <scope>TISSUE SPECIFICITY</scope>
    <scope>TRANSPORTER ACTIVITY</scope>
    <scope>BIOPHYSICOCHEMICAL PROPERTIES</scope>
</reference>
<reference key="2">
    <citation type="journal article" date="1997" name="Brain Res. Mol. Brain Res.">
        <title>Gene structure and 5'-flanking regulatory region of the murine serotonin transporter.</title>
        <authorList>
            <person name="Bengel D."/>
            <person name="Heils A."/>
            <person name="Petri S."/>
            <person name="Seemann M."/>
            <person name="Glatz K."/>
            <person name="Andrews A."/>
            <person name="Murphy D.L."/>
            <person name="Lesch K.P."/>
        </authorList>
    </citation>
    <scope>NUCLEOTIDE SEQUENCE [GENOMIC DNA]</scope>
    <source>
        <strain>129</strain>
    </source>
</reference>
<reference key="3">
    <citation type="journal article" date="2009" name="PLoS Biol.">
        <title>Lineage-specific biology revealed by a finished genome assembly of the mouse.</title>
        <authorList>
            <person name="Church D.M."/>
            <person name="Goodstadt L."/>
            <person name="Hillier L.W."/>
            <person name="Zody M.C."/>
            <person name="Goldstein S."/>
            <person name="She X."/>
            <person name="Bult C.J."/>
            <person name="Agarwala R."/>
            <person name="Cherry J.L."/>
            <person name="DiCuccio M."/>
            <person name="Hlavina W."/>
            <person name="Kapustin Y."/>
            <person name="Meric P."/>
            <person name="Maglott D."/>
            <person name="Birtle Z."/>
            <person name="Marques A.C."/>
            <person name="Graves T."/>
            <person name="Zhou S."/>
            <person name="Teague B."/>
            <person name="Potamousis K."/>
            <person name="Churas C."/>
            <person name="Place M."/>
            <person name="Herschleb J."/>
            <person name="Runnheim R."/>
            <person name="Forrest D."/>
            <person name="Amos-Landgraf J."/>
            <person name="Schwartz D.C."/>
            <person name="Cheng Z."/>
            <person name="Lindblad-Toh K."/>
            <person name="Eichler E.E."/>
            <person name="Ponting C.P."/>
        </authorList>
    </citation>
    <scope>NUCLEOTIDE SEQUENCE [LARGE SCALE GENOMIC DNA]</scope>
    <source>
        <strain>C57BL/6J</strain>
    </source>
</reference>
<reference key="4">
    <citation type="submission" date="1995-05" db="EMBL/GenBank/DDBJ databases">
        <authorList>
            <person name="Saito N."/>
            <person name="Sakai N."/>
            <person name="Kobayashi S."/>
            <person name="Fujimoto M."/>
            <person name="Morikawa O."/>
            <person name="Ikegaki N."/>
        </authorList>
    </citation>
    <scope>NUCLEOTIDE SEQUENCE [GENOMIC DNA] OF 1-114</scope>
    <source>
        <strain>BALB/cJ</strain>
    </source>
</reference>
<reference key="5">
    <citation type="journal article" date="1993" name="Mamm. Genome">
        <title>Murine serotonin transporter: sequence and localization to chromosome 11.</title>
        <authorList>
            <person name="Gregor P."/>
            <person name="Patel A."/>
            <person name="Shimada S."/>
            <person name="Lin C.L."/>
            <person name="Rochelle J.M."/>
            <person name="Kitayama S."/>
            <person name="Seldin M.F."/>
            <person name="Uhl G.R."/>
        </authorList>
    </citation>
    <scope>NUCLEOTIDE SEQUENCE [MRNA] OF 69-630</scope>
</reference>
<reference key="6">
    <citation type="journal article" date="1998" name="Mol. Pharmacol.">
        <title>Altered brain serotonin homeostasis and locomotor insensitivity to 3, 4-methylenedioxymethamphetamine ('Ecstasy') in serotonin transporter-deficient mice.</title>
        <authorList>
            <person name="Bengel D."/>
            <person name="Murphy D.L."/>
            <person name="Andrews A.M."/>
            <person name="Wichems C.H."/>
            <person name="Feltner D."/>
            <person name="Heils A."/>
            <person name="Mossner R."/>
            <person name="Westphal H."/>
            <person name="Lesch K.P."/>
        </authorList>
    </citation>
    <scope>DISRUPTION PHENOTYPE</scope>
    <scope>FUNCTION</scope>
    <scope>TRANSPORTER ACTIVITY</scope>
</reference>
<reference key="7">
    <citation type="journal article" date="2006" name="J. Biol. Chem.">
        <title>Serotonin-, protein kinase C-, and Hic-5-associated redistribution of the platelet serotonin transporter.</title>
        <authorList>
            <person name="Carneiro A.M.D."/>
            <person name="Blakely R.D."/>
        </authorList>
    </citation>
    <scope>INTERACTION WITH TGFB1I1</scope>
</reference>
<reference key="8">
    <citation type="journal article" date="2007" name="Proc. Natl. Acad. Sci. U.S.A.">
        <title>Physical interaction between the serotonin transporter and neuronal nitric oxide synthase underlies reciprocal modulation of their activity.</title>
        <authorList>
            <person name="Chanrion B."/>
            <person name="Mannoury la Cour C."/>
            <person name="Bertaso F."/>
            <person name="Lerner-Natoli M."/>
            <person name="Freissmuth M."/>
            <person name="Millan M.J."/>
            <person name="Bockaert J."/>
            <person name="Marin P."/>
        </authorList>
    </citation>
    <scope>INTERACTION WITH NOS1; SEC23A; SEC24C AND PATJ</scope>
</reference>
<reference key="9">
    <citation type="journal article" date="2008" name="J. Clin. Invest.">
        <title>Interactions between integrin alphaIIbbeta3 and the serotonin transporter regulate serotonin transport and platelet aggregation in mice and humans.</title>
        <authorList>
            <person name="Carneiro A.M."/>
            <person name="Cook E.H."/>
            <person name="Murphy D.L."/>
            <person name="Blakely R.D."/>
        </authorList>
    </citation>
    <scope>FUNCTION</scope>
    <scope>DISRUPTION PHENOTYPE</scope>
</reference>
<reference key="10">
    <citation type="journal article" date="2010" name="EMBO J.">
        <title>Zic2 regulates the expression of Sert to modulate eye-specific refinement at the visual targets.</title>
        <authorList>
            <person name="Garcia-Frigola C."/>
            <person name="Herrera E."/>
        </authorList>
    </citation>
    <scope>DEVELOPMENTAL STAGE</scope>
</reference>
<reference key="11">
    <citation type="journal article" date="2012" name="Mol. Pharmacol.">
        <title>Role of activating transcription factor-4 in 24-hour rhythm of serotonin transporter expression in the mouse midbrain.</title>
        <authorList>
            <person name="Ushijima K."/>
            <person name="Koyanagi S."/>
            <person name="Sato Y."/>
            <person name="Ogata T."/>
            <person name="Matsunaga N."/>
            <person name="Fujimura A."/>
            <person name="Ohdo S."/>
        </authorList>
    </citation>
    <scope>INDUCTION</scope>
</reference>
<reference key="12">
    <citation type="journal article" date="2015" name="Cell Rep.">
        <title>Disruption of Transient Serotonin Accumulation by Non-Serotonin-Producing Neurons Impairs Cortical Map Development.</title>
        <authorList>
            <person name="Chen X."/>
            <person name="Ye R."/>
            <person name="Gargus J.J."/>
            <person name="Blakely R.D."/>
            <person name="Dobrenis K."/>
            <person name="Sze J.Y."/>
        </authorList>
    </citation>
    <scope>FUNCTION</scope>
    <scope>TRANSPORTER ACTIVITY</scope>
    <scope>TISSUE SPECIFICITY</scope>
    <scope>DEVELOPMENTAL STAGE</scope>
    <scope>DISRUPTION PHENOTYPE</scope>
    <scope>SUBCELLULAR LOCATION</scope>
</reference>
<reference key="13">
    <citation type="journal article" date="2016" name="J. Clin. Invest.">
        <title>Serotonin transporter variant drives preventable gastrointestinal abnormalities in development and function.</title>
        <authorList>
            <person name="Margolis K.G."/>
            <person name="Li Z."/>
            <person name="Stevanovic K."/>
            <person name="Saurman V."/>
            <person name="Israelyan N."/>
            <person name="Anderson G.M."/>
            <person name="Snyder I."/>
            <person name="Veenstra-VanderWeele J."/>
            <person name="Blakely R.D."/>
            <person name="Gershon M.D."/>
        </authorList>
    </citation>
    <scope>FUNCTION</scope>
    <scope>DISRUPTION PHENOTYPE</scope>
</reference>
<reference key="14">
    <citation type="journal article" date="2017" name="J. Neurosci.">
        <title>The Gain-of-Function Integrin beta3 Pro33 Variant Alters the Serotonin System in the Mouse Brain.</title>
        <authorList>
            <person name="Dohn M.R."/>
            <person name="Kooker C.G."/>
            <person name="Bastarache L."/>
            <person name="Jessen T."/>
            <person name="Rinaldi C."/>
            <person name="Varney S."/>
            <person name="Mazalouskas M.D."/>
            <person name="Pan H."/>
            <person name="Oliver K.H."/>
            <person name="Velez Edwards D.R."/>
            <person name="Sutcliffe J.S."/>
            <person name="Denny J.C."/>
            <person name="Carneiro A.M.D."/>
        </authorList>
    </citation>
    <scope>INTERACTION WITH ITGB3</scope>
    <scope>SUBCELLULAR LOCATION</scope>
</reference>
<dbReference type="EMBL" id="AF013604">
    <property type="protein sequence ID" value="AAB67172.1"/>
    <property type="molecule type" value="mRNA"/>
</dbReference>
<dbReference type="EMBL" id="Y08870">
    <property type="protein sequence ID" value="CAA70092.1"/>
    <property type="molecule type" value="Genomic_DNA"/>
</dbReference>
<dbReference type="EMBL" id="Y08871">
    <property type="protein sequence ID" value="CAA70092.1"/>
    <property type="status" value="JOINED"/>
    <property type="molecule type" value="Genomic_DNA"/>
</dbReference>
<dbReference type="EMBL" id="Y08872">
    <property type="protein sequence ID" value="CAA70092.1"/>
    <property type="status" value="JOINED"/>
    <property type="molecule type" value="Genomic_DNA"/>
</dbReference>
<dbReference type="EMBL" id="Y08873">
    <property type="protein sequence ID" value="CAA70092.1"/>
    <property type="status" value="JOINED"/>
    <property type="molecule type" value="Genomic_DNA"/>
</dbReference>
<dbReference type="EMBL" id="Y08874">
    <property type="protein sequence ID" value="CAA70092.1"/>
    <property type="status" value="JOINED"/>
    <property type="molecule type" value="Genomic_DNA"/>
</dbReference>
<dbReference type="EMBL" id="Y08875">
    <property type="protein sequence ID" value="CAA70092.1"/>
    <property type="status" value="JOINED"/>
    <property type="molecule type" value="Genomic_DNA"/>
</dbReference>
<dbReference type="EMBL" id="Y08876">
    <property type="protein sequence ID" value="CAA70092.1"/>
    <property type="status" value="JOINED"/>
    <property type="molecule type" value="Genomic_DNA"/>
</dbReference>
<dbReference type="EMBL" id="Y08877">
    <property type="protein sequence ID" value="CAA70092.1"/>
    <property type="status" value="JOINED"/>
    <property type="molecule type" value="Genomic_DNA"/>
</dbReference>
<dbReference type="EMBL" id="Y08878">
    <property type="protein sequence ID" value="CAA70092.1"/>
    <property type="status" value="JOINED"/>
    <property type="molecule type" value="Genomic_DNA"/>
</dbReference>
<dbReference type="EMBL" id="Y08879">
    <property type="protein sequence ID" value="CAA70092.1"/>
    <property type="status" value="JOINED"/>
    <property type="molecule type" value="Genomic_DNA"/>
</dbReference>
<dbReference type="EMBL" id="Y08880">
    <property type="protein sequence ID" value="CAA70092.1"/>
    <property type="status" value="JOINED"/>
    <property type="molecule type" value="Genomic_DNA"/>
</dbReference>
<dbReference type="EMBL" id="AL603842">
    <property type="status" value="NOT_ANNOTATED_CDS"/>
    <property type="molecule type" value="Genomic_DNA"/>
</dbReference>
<dbReference type="EMBL" id="U26452">
    <property type="protein sequence ID" value="AAA84750.1"/>
    <property type="molecule type" value="Genomic_DNA"/>
</dbReference>
<dbReference type="EMBL" id="X66119">
    <property type="status" value="NOT_ANNOTATED_CDS"/>
    <property type="molecule type" value="mRNA"/>
</dbReference>
<dbReference type="CCDS" id="CCDS25074.1"/>
<dbReference type="RefSeq" id="NP_034614.2">
    <property type="nucleotide sequence ID" value="NM_010484.2"/>
</dbReference>
<dbReference type="RefSeq" id="XP_006532362.1">
    <property type="nucleotide sequence ID" value="XM_006532299.2"/>
</dbReference>
<dbReference type="RefSeq" id="XP_006532363.1">
    <property type="nucleotide sequence ID" value="XM_006532300.2"/>
</dbReference>
<dbReference type="RefSeq" id="XP_006532364.1">
    <property type="nucleotide sequence ID" value="XM_006532301.3"/>
</dbReference>
<dbReference type="SMR" id="Q60857"/>
<dbReference type="BioGRID" id="200481">
    <property type="interactions" value="420"/>
</dbReference>
<dbReference type="DIP" id="DIP-60923N"/>
<dbReference type="FunCoup" id="Q60857">
    <property type="interactions" value="262"/>
</dbReference>
<dbReference type="IntAct" id="Q60857">
    <property type="interactions" value="5"/>
</dbReference>
<dbReference type="STRING" id="10090.ENSMUSP00000104039"/>
<dbReference type="BindingDB" id="Q60857"/>
<dbReference type="ChEMBL" id="CHEMBL4642"/>
<dbReference type="DrugCentral" id="Q60857"/>
<dbReference type="GlyCosmos" id="Q60857">
    <property type="glycosylation" value="2 sites, No reported glycans"/>
</dbReference>
<dbReference type="GlyGen" id="Q60857">
    <property type="glycosylation" value="3 sites"/>
</dbReference>
<dbReference type="PhosphoSitePlus" id="Q60857"/>
<dbReference type="SwissPalm" id="Q60857"/>
<dbReference type="PaxDb" id="10090-ENSMUSP00000021195"/>
<dbReference type="ProteomicsDB" id="255473"/>
<dbReference type="Antibodypedia" id="26840">
    <property type="antibodies" value="367 antibodies from 35 providers"/>
</dbReference>
<dbReference type="DNASU" id="15567"/>
<dbReference type="Ensembl" id="ENSMUST00000021195.11">
    <property type="protein sequence ID" value="ENSMUSP00000021195.5"/>
    <property type="gene ID" value="ENSMUSG00000020838.13"/>
</dbReference>
<dbReference type="Ensembl" id="ENSMUST00000108402.9">
    <property type="protein sequence ID" value="ENSMUSP00000104039.3"/>
    <property type="gene ID" value="ENSMUSG00000020838.13"/>
</dbReference>
<dbReference type="GeneID" id="15567"/>
<dbReference type="KEGG" id="mmu:15567"/>
<dbReference type="UCSC" id="uc007kgf.2">
    <property type="organism name" value="mouse"/>
</dbReference>
<dbReference type="AGR" id="MGI:96285"/>
<dbReference type="CTD" id="6532"/>
<dbReference type="MGI" id="MGI:96285">
    <property type="gene designation" value="Slc6a4"/>
</dbReference>
<dbReference type="VEuPathDB" id="HostDB:ENSMUSG00000020838"/>
<dbReference type="eggNOG" id="KOG3659">
    <property type="taxonomic scope" value="Eukaryota"/>
</dbReference>
<dbReference type="GeneTree" id="ENSGT00940000157855"/>
<dbReference type="HOGENOM" id="CLU_006855_9_0_1"/>
<dbReference type="InParanoid" id="Q60857"/>
<dbReference type="OMA" id="GEDCQGN"/>
<dbReference type="OrthoDB" id="6581954at2759"/>
<dbReference type="PhylomeDB" id="Q60857"/>
<dbReference type="TreeFam" id="TF343812"/>
<dbReference type="Reactome" id="R-MMU-380615">
    <property type="pathway name" value="Serotonin clearance from the synaptic cleft"/>
</dbReference>
<dbReference type="BioGRID-ORCS" id="15567">
    <property type="hits" value="2 hits in 78 CRISPR screens"/>
</dbReference>
<dbReference type="PRO" id="PR:Q60857"/>
<dbReference type="Proteomes" id="UP000000589">
    <property type="component" value="Chromosome 11"/>
</dbReference>
<dbReference type="RNAct" id="Q60857">
    <property type="molecule type" value="protein"/>
</dbReference>
<dbReference type="Bgee" id="ENSMUSG00000020838">
    <property type="expression patterns" value="Expressed in central gray substance of midbrain and 110 other cell types or tissues"/>
</dbReference>
<dbReference type="ExpressionAtlas" id="Q60857">
    <property type="expression patterns" value="baseline and differential"/>
</dbReference>
<dbReference type="GO" id="GO:0012505">
    <property type="term" value="C:endomembrane system"/>
    <property type="evidence" value="ECO:0000250"/>
    <property type="project" value="UniProtKB"/>
</dbReference>
<dbReference type="GO" id="GO:0010008">
    <property type="term" value="C:endosome membrane"/>
    <property type="evidence" value="ECO:0007669"/>
    <property type="project" value="UniProtKB-SubCell"/>
</dbReference>
<dbReference type="GO" id="GO:0005925">
    <property type="term" value="C:focal adhesion"/>
    <property type="evidence" value="ECO:0000314"/>
    <property type="project" value="UniProtKB"/>
</dbReference>
<dbReference type="GO" id="GO:0045121">
    <property type="term" value="C:membrane raft"/>
    <property type="evidence" value="ECO:0007669"/>
    <property type="project" value="Ensembl"/>
</dbReference>
<dbReference type="GO" id="GO:0043005">
    <property type="term" value="C:neuron projection"/>
    <property type="evidence" value="ECO:0007669"/>
    <property type="project" value="UniProtKB-SubCell"/>
</dbReference>
<dbReference type="GO" id="GO:0005886">
    <property type="term" value="C:plasma membrane"/>
    <property type="evidence" value="ECO:0000250"/>
    <property type="project" value="UniProtKB"/>
</dbReference>
<dbReference type="GO" id="GO:0045211">
    <property type="term" value="C:postsynaptic membrane"/>
    <property type="evidence" value="ECO:0007669"/>
    <property type="project" value="Ensembl"/>
</dbReference>
<dbReference type="GO" id="GO:0042734">
    <property type="term" value="C:presynaptic membrane"/>
    <property type="evidence" value="ECO:0007669"/>
    <property type="project" value="Ensembl"/>
</dbReference>
<dbReference type="GO" id="GO:0099154">
    <property type="term" value="C:serotonergic synapse"/>
    <property type="evidence" value="ECO:0007669"/>
    <property type="project" value="Ensembl"/>
</dbReference>
<dbReference type="GO" id="GO:0045202">
    <property type="term" value="C:synapse"/>
    <property type="evidence" value="ECO:0000314"/>
    <property type="project" value="UniProtKB"/>
</dbReference>
<dbReference type="GO" id="GO:0051015">
    <property type="term" value="F:actin filament binding"/>
    <property type="evidence" value="ECO:0000250"/>
    <property type="project" value="UniProtKB"/>
</dbReference>
<dbReference type="GO" id="GO:0015297">
    <property type="term" value="F:antiporter activity"/>
    <property type="evidence" value="ECO:0007669"/>
    <property type="project" value="UniProtKB-KW"/>
</dbReference>
<dbReference type="GO" id="GO:0019811">
    <property type="term" value="F:cocaine binding"/>
    <property type="evidence" value="ECO:0007669"/>
    <property type="project" value="Ensembl"/>
</dbReference>
<dbReference type="GO" id="GO:0042802">
    <property type="term" value="F:identical protein binding"/>
    <property type="evidence" value="ECO:0000250"/>
    <property type="project" value="UniProtKB"/>
</dbReference>
<dbReference type="GO" id="GO:0005178">
    <property type="term" value="F:integrin binding"/>
    <property type="evidence" value="ECO:0000250"/>
    <property type="project" value="UniProtKB"/>
</dbReference>
<dbReference type="GO" id="GO:0008504">
    <property type="term" value="F:monoamine transmembrane transporter activity"/>
    <property type="evidence" value="ECO:0000315"/>
    <property type="project" value="ARUK-UCL"/>
</dbReference>
<dbReference type="GO" id="GO:0005261">
    <property type="term" value="F:monoatomic cation channel activity"/>
    <property type="evidence" value="ECO:0000250"/>
    <property type="project" value="UniProtKB"/>
</dbReference>
<dbReference type="GO" id="GO:0005326">
    <property type="term" value="F:neurotransmitter transmembrane transporter activity"/>
    <property type="evidence" value="ECO:0000315"/>
    <property type="project" value="ARUK-UCL"/>
</dbReference>
<dbReference type="GO" id="GO:0050998">
    <property type="term" value="F:nitric-oxide synthase binding"/>
    <property type="evidence" value="ECO:0000353"/>
    <property type="project" value="UniProtKB"/>
</dbReference>
<dbReference type="GO" id="GO:0051378">
    <property type="term" value="F:serotonin binding"/>
    <property type="evidence" value="ECO:0000250"/>
    <property type="project" value="UniProtKB"/>
</dbReference>
<dbReference type="GO" id="GO:0005335">
    <property type="term" value="F:serotonin:sodium:chloride symporter activity"/>
    <property type="evidence" value="ECO:0000314"/>
    <property type="project" value="UniProtKB"/>
</dbReference>
<dbReference type="GO" id="GO:0031402">
    <property type="term" value="F:sodium ion binding"/>
    <property type="evidence" value="ECO:0000250"/>
    <property type="project" value="UniProtKB"/>
</dbReference>
<dbReference type="GO" id="GO:0017075">
    <property type="term" value="F:syntaxin-1 binding"/>
    <property type="evidence" value="ECO:0007669"/>
    <property type="project" value="Ensembl"/>
</dbReference>
<dbReference type="GO" id="GO:0048148">
    <property type="term" value="P:behavioral response to cocaine"/>
    <property type="evidence" value="ECO:0007669"/>
    <property type="project" value="Ensembl"/>
</dbReference>
<dbReference type="GO" id="GO:0048854">
    <property type="term" value="P:brain morphogenesis"/>
    <property type="evidence" value="ECO:0000315"/>
    <property type="project" value="CACAO"/>
</dbReference>
<dbReference type="GO" id="GO:0071321">
    <property type="term" value="P:cellular response to cGMP"/>
    <property type="evidence" value="ECO:0007669"/>
    <property type="project" value="Ensembl"/>
</dbReference>
<dbReference type="GO" id="GO:0071300">
    <property type="term" value="P:cellular response to retinoic acid"/>
    <property type="evidence" value="ECO:0007669"/>
    <property type="project" value="Ensembl"/>
</dbReference>
<dbReference type="GO" id="GO:0007623">
    <property type="term" value="P:circadian rhythm"/>
    <property type="evidence" value="ECO:0007669"/>
    <property type="project" value="Ensembl"/>
</dbReference>
<dbReference type="GO" id="GO:1990708">
    <property type="term" value="P:conditioned place preference"/>
    <property type="evidence" value="ECO:0007669"/>
    <property type="project" value="Ensembl"/>
</dbReference>
<dbReference type="GO" id="GO:0048484">
    <property type="term" value="P:enteric nervous system development"/>
    <property type="evidence" value="ECO:0000315"/>
    <property type="project" value="UniProtKB"/>
</dbReference>
<dbReference type="GO" id="GO:0060179">
    <property type="term" value="P:male mating behavior"/>
    <property type="evidence" value="ECO:0007669"/>
    <property type="project" value="Ensembl"/>
</dbReference>
<dbReference type="GO" id="GO:0051899">
    <property type="term" value="P:membrane depolarization"/>
    <property type="evidence" value="ECO:0000250"/>
    <property type="project" value="UniProtKB"/>
</dbReference>
<dbReference type="GO" id="GO:0007613">
    <property type="term" value="P:memory"/>
    <property type="evidence" value="ECO:0007669"/>
    <property type="project" value="Ensembl"/>
</dbReference>
<dbReference type="GO" id="GO:0015844">
    <property type="term" value="P:monoamine transport"/>
    <property type="evidence" value="ECO:0000266"/>
    <property type="project" value="MGI"/>
</dbReference>
<dbReference type="GO" id="GO:0021941">
    <property type="term" value="P:negative regulation of cerebellar granule cell precursor proliferation"/>
    <property type="evidence" value="ECO:0007669"/>
    <property type="project" value="Ensembl"/>
</dbReference>
<dbReference type="GO" id="GO:0045665">
    <property type="term" value="P:negative regulation of neuron differentiation"/>
    <property type="evidence" value="ECO:0007669"/>
    <property type="project" value="Ensembl"/>
</dbReference>
<dbReference type="GO" id="GO:0046621">
    <property type="term" value="P:negative regulation of organ growth"/>
    <property type="evidence" value="ECO:0000315"/>
    <property type="project" value="CACAO"/>
</dbReference>
<dbReference type="GO" id="GO:0032227">
    <property type="term" value="P:negative regulation of synaptic transmission, dopaminergic"/>
    <property type="evidence" value="ECO:0007669"/>
    <property type="project" value="Ensembl"/>
</dbReference>
<dbReference type="GO" id="GO:0098810">
    <property type="term" value="P:neurotransmitter reuptake"/>
    <property type="evidence" value="ECO:0000314"/>
    <property type="project" value="SynGO"/>
</dbReference>
<dbReference type="GO" id="GO:0006836">
    <property type="term" value="P:neurotransmitter transport"/>
    <property type="evidence" value="ECO:0000315"/>
    <property type="project" value="ARUK-UCL"/>
</dbReference>
<dbReference type="GO" id="GO:0070527">
    <property type="term" value="P:platelet aggregation"/>
    <property type="evidence" value="ECO:0000315"/>
    <property type="project" value="UniProtKB"/>
</dbReference>
<dbReference type="GO" id="GO:0045787">
    <property type="term" value="P:positive regulation of cell cycle"/>
    <property type="evidence" value="ECO:0000315"/>
    <property type="project" value="UniProtKB"/>
</dbReference>
<dbReference type="GO" id="GO:0010628">
    <property type="term" value="P:positive regulation of gene expression"/>
    <property type="evidence" value="ECO:0000315"/>
    <property type="project" value="UniProtKB"/>
</dbReference>
<dbReference type="GO" id="GO:0014064">
    <property type="term" value="P:positive regulation of serotonin secretion"/>
    <property type="evidence" value="ECO:0007669"/>
    <property type="project" value="Ensembl"/>
</dbReference>
<dbReference type="GO" id="GO:0090067">
    <property type="term" value="P:regulation of thalamus size"/>
    <property type="evidence" value="ECO:0000250"/>
    <property type="project" value="UniProtKB"/>
</dbReference>
<dbReference type="GO" id="GO:0032355">
    <property type="term" value="P:response to estradiol"/>
    <property type="evidence" value="ECO:0007669"/>
    <property type="project" value="Ensembl"/>
</dbReference>
<dbReference type="GO" id="GO:0001666">
    <property type="term" value="P:response to hypoxia"/>
    <property type="evidence" value="ECO:0007669"/>
    <property type="project" value="Ensembl"/>
</dbReference>
<dbReference type="GO" id="GO:0007584">
    <property type="term" value="P:response to nutrient"/>
    <property type="evidence" value="ECO:0007669"/>
    <property type="project" value="Ensembl"/>
</dbReference>
<dbReference type="GO" id="GO:0009636">
    <property type="term" value="P:response to toxic substance"/>
    <property type="evidence" value="ECO:0007669"/>
    <property type="project" value="Ensembl"/>
</dbReference>
<dbReference type="GO" id="GO:0009410">
    <property type="term" value="P:response to xenobiotic stimulus"/>
    <property type="evidence" value="ECO:0007669"/>
    <property type="project" value="Ensembl"/>
</dbReference>
<dbReference type="GO" id="GO:0006837">
    <property type="term" value="P:serotonin transport"/>
    <property type="evidence" value="ECO:0000315"/>
    <property type="project" value="UniProtKB"/>
</dbReference>
<dbReference type="GO" id="GO:0051610">
    <property type="term" value="P:serotonin uptake"/>
    <property type="evidence" value="ECO:0000314"/>
    <property type="project" value="UniProtKB"/>
</dbReference>
<dbReference type="GO" id="GO:0042310">
    <property type="term" value="P:vasoconstriction"/>
    <property type="evidence" value="ECO:0007669"/>
    <property type="project" value="Ensembl"/>
</dbReference>
<dbReference type="CDD" id="cd11513">
    <property type="entry name" value="SLC6sbd_SERT"/>
    <property type="match status" value="1"/>
</dbReference>
<dbReference type="InterPro" id="IPR000175">
    <property type="entry name" value="Na/ntran_symport"/>
</dbReference>
<dbReference type="InterPro" id="IPR013086">
    <property type="entry name" value="Na/ntran_symport_serotonin_N"/>
</dbReference>
<dbReference type="InterPro" id="IPR037272">
    <property type="entry name" value="SNS_sf"/>
</dbReference>
<dbReference type="NCBIfam" id="NF037979">
    <property type="entry name" value="Na_transp"/>
    <property type="match status" value="1"/>
</dbReference>
<dbReference type="PANTHER" id="PTHR11616:SF105">
    <property type="entry name" value="SODIUM-DEPENDENT SEROTONIN TRANSPORTER"/>
    <property type="match status" value="1"/>
</dbReference>
<dbReference type="PANTHER" id="PTHR11616">
    <property type="entry name" value="SODIUM/CHLORIDE DEPENDENT TRANSPORTER"/>
    <property type="match status" value="1"/>
</dbReference>
<dbReference type="Pfam" id="PF03491">
    <property type="entry name" value="5HT_transport_N"/>
    <property type="match status" value="1"/>
</dbReference>
<dbReference type="Pfam" id="PF00209">
    <property type="entry name" value="SNF"/>
    <property type="match status" value="1"/>
</dbReference>
<dbReference type="PRINTS" id="PR01203">
    <property type="entry name" value="5HTTRANSPORT"/>
</dbReference>
<dbReference type="PRINTS" id="PR00176">
    <property type="entry name" value="NANEUSMPORT"/>
</dbReference>
<dbReference type="SUPFAM" id="SSF161070">
    <property type="entry name" value="SNF-like"/>
    <property type="match status" value="1"/>
</dbReference>
<dbReference type="PROSITE" id="PS00610">
    <property type="entry name" value="NA_NEUROTRAN_SYMP_1"/>
    <property type="match status" value="1"/>
</dbReference>
<dbReference type="PROSITE" id="PS00754">
    <property type="entry name" value="NA_NEUROTRAN_SYMP_2"/>
    <property type="match status" value="1"/>
</dbReference>
<dbReference type="PROSITE" id="PS50267">
    <property type="entry name" value="NA_NEUROTRAN_SYMP_3"/>
    <property type="match status" value="1"/>
</dbReference>
<accession>Q60857</accession>
<accession>O35241</accession>
<accession>Q5NCR6</accession>
<proteinExistence type="evidence at protein level"/>
<gene>
    <name evidence="21" type="primary">Slc6a4</name>
    <name type="synonym">Htt</name>
    <name evidence="17" type="synonym">Sert</name>
</gene>
<feature type="chain" id="PRO_0000214759" description="Sodium-dependent serotonin transporter">
    <location>
        <begin position="1"/>
        <end position="630"/>
    </location>
</feature>
<feature type="topological domain" description="Cytoplasmic" evidence="18">
    <location>
        <begin position="1"/>
        <end position="87"/>
    </location>
</feature>
<feature type="transmembrane region" description="Helical; Name=1" evidence="2">
    <location>
        <begin position="88"/>
        <end position="112"/>
    </location>
</feature>
<feature type="topological domain" description="Extracellular" evidence="18">
    <location>
        <begin position="113"/>
        <end position="115"/>
    </location>
</feature>
<feature type="transmembrane region" description="Helical; Name=2" evidence="2">
    <location>
        <begin position="116"/>
        <end position="135"/>
    </location>
</feature>
<feature type="topological domain" description="Cytoplasmic" evidence="18">
    <location>
        <begin position="136"/>
        <end position="160"/>
    </location>
</feature>
<feature type="transmembrane region" description="Helical; Name=3" evidence="2">
    <location>
        <begin position="161"/>
        <end position="186"/>
    </location>
</feature>
<feature type="topological domain" description="Extracellular" evidence="18">
    <location>
        <begin position="187"/>
        <end position="252"/>
    </location>
</feature>
<feature type="transmembrane region" description="Helical; Name=4" evidence="2">
    <location>
        <begin position="253"/>
        <end position="271"/>
    </location>
</feature>
<feature type="topological domain" description="Cytoplasmic" evidence="18">
    <location>
        <begin position="272"/>
        <end position="277"/>
    </location>
</feature>
<feature type="transmembrane region" description="Helical; Name=5" evidence="2">
    <location>
        <begin position="278"/>
        <end position="297"/>
    </location>
</feature>
<feature type="topological domain" description="Extracellular" evidence="18">
    <location>
        <begin position="298"/>
        <end position="324"/>
    </location>
</feature>
<feature type="transmembrane region" description="Helical; Name=6" evidence="2">
    <location>
        <begin position="325"/>
        <end position="347"/>
    </location>
</feature>
<feature type="topological domain" description="Cytoplasmic" evidence="18">
    <location>
        <begin position="348"/>
        <end position="360"/>
    </location>
</feature>
<feature type="transmembrane region" description="Helical; Name=7" evidence="2">
    <location>
        <begin position="361"/>
        <end position="380"/>
    </location>
</feature>
<feature type="topological domain" description="Extracellular" evidence="18">
    <location>
        <begin position="381"/>
        <end position="421"/>
    </location>
</feature>
<feature type="transmembrane region" description="Helical; Name=8" evidence="2">
    <location>
        <begin position="422"/>
        <end position="443"/>
    </location>
</feature>
<feature type="topological domain" description="Cytoplasmic" evidence="18">
    <location>
        <begin position="444"/>
        <end position="463"/>
    </location>
</feature>
<feature type="transmembrane region" description="Helical; Name=9" evidence="2">
    <location>
        <begin position="464"/>
        <end position="483"/>
    </location>
</feature>
<feature type="topological domain" description="Extracellular" evidence="18">
    <location>
        <begin position="484"/>
        <end position="494"/>
    </location>
</feature>
<feature type="transmembrane region" description="Helical; Name=10" evidence="2">
    <location>
        <begin position="495"/>
        <end position="516"/>
    </location>
</feature>
<feature type="topological domain" description="Cytoplasmic" evidence="18">
    <location>
        <begin position="517"/>
        <end position="538"/>
    </location>
</feature>
<feature type="transmembrane region" description="Helical; Name=11" evidence="2">
    <location>
        <begin position="539"/>
        <end position="558"/>
    </location>
</feature>
<feature type="topological domain" description="Extracellular" evidence="18">
    <location>
        <begin position="559"/>
        <end position="574"/>
    </location>
</feature>
<feature type="transmembrane region" description="Helical; Name=12" evidence="2">
    <location>
        <begin position="575"/>
        <end position="595"/>
    </location>
</feature>
<feature type="topological domain" description="Cytoplasmic" evidence="18">
    <location>
        <begin position="596"/>
        <end position="630"/>
    </location>
</feature>
<feature type="region of interest" description="Disordered" evidence="6">
    <location>
        <begin position="1"/>
        <end position="63"/>
    </location>
</feature>
<feature type="region of interest" description="Interaction with RAB4A" evidence="1">
    <location>
        <begin position="616"/>
        <end position="624"/>
    </location>
</feature>
<feature type="compositionally biased region" description="Polar residues" evidence="6">
    <location>
        <begin position="1"/>
        <end position="11"/>
    </location>
</feature>
<feature type="compositionally biased region" description="Polar residues" evidence="6">
    <location>
        <begin position="42"/>
        <end position="55"/>
    </location>
</feature>
<feature type="binding site" evidence="4">
    <location>
        <position position="94"/>
    </location>
    <ligand>
        <name>Na(+)</name>
        <dbReference type="ChEBI" id="CHEBI:29101"/>
        <label>1</label>
    </ligand>
</feature>
<feature type="binding site" evidence="4">
    <location>
        <position position="96"/>
    </location>
    <ligand>
        <name>Na(+)</name>
        <dbReference type="ChEBI" id="CHEBI:29101"/>
        <label>2</label>
    </ligand>
</feature>
<feature type="binding site" evidence="4">
    <location>
        <position position="97"/>
    </location>
    <ligand>
        <name>Na(+)</name>
        <dbReference type="ChEBI" id="CHEBI:29101"/>
        <label>1</label>
    </ligand>
</feature>
<feature type="binding site" evidence="2">
    <location>
        <position position="98"/>
    </location>
    <ligand>
        <name>Na(+)</name>
        <dbReference type="ChEBI" id="CHEBI:29101"/>
        <label>2</label>
    </ligand>
</feature>
<feature type="binding site" evidence="2">
    <location>
        <position position="98"/>
    </location>
    <ligand>
        <name>serotonin</name>
        <dbReference type="ChEBI" id="CHEBI:350546"/>
    </ligand>
</feature>
<feature type="binding site" evidence="4">
    <location>
        <position position="101"/>
    </location>
    <ligand>
        <name>Na(+)</name>
        <dbReference type="ChEBI" id="CHEBI:29101"/>
        <label>2</label>
    </ligand>
</feature>
<feature type="binding site" evidence="4">
    <location>
        <position position="336"/>
    </location>
    <ligand>
        <name>Na(+)</name>
        <dbReference type="ChEBI" id="CHEBI:29101"/>
        <label>2</label>
    </ligand>
</feature>
<feature type="binding site" evidence="4">
    <location>
        <position position="368"/>
    </location>
    <ligand>
        <name>Na(+)</name>
        <dbReference type="ChEBI" id="CHEBI:29101"/>
        <label>2</label>
    </ligand>
</feature>
<feature type="binding site" evidence="4">
    <location>
        <position position="434"/>
    </location>
    <ligand>
        <name>Na(+)</name>
        <dbReference type="ChEBI" id="CHEBI:29101"/>
        <label>1</label>
    </ligand>
</feature>
<feature type="binding site" evidence="4">
    <location>
        <position position="437"/>
    </location>
    <ligand>
        <name>Na(+)</name>
        <dbReference type="ChEBI" id="CHEBI:29101"/>
        <label>1</label>
    </ligand>
</feature>
<feature type="binding site" evidence="4">
    <location>
        <position position="438"/>
    </location>
    <ligand>
        <name>Na(+)</name>
        <dbReference type="ChEBI" id="CHEBI:29101"/>
        <label>1</label>
    </ligand>
</feature>
<feature type="binding site" evidence="2">
    <location>
        <position position="439"/>
    </location>
    <ligand>
        <name>serotonin</name>
        <dbReference type="ChEBI" id="CHEBI:350546"/>
    </ligand>
</feature>
<feature type="binding site" evidence="2">
    <location>
        <position position="494"/>
    </location>
    <ligand>
        <name>serotonin</name>
        <dbReference type="ChEBI" id="CHEBI:350546"/>
    </ligand>
</feature>
<feature type="binding site" evidence="2">
    <location>
        <position position="495"/>
    </location>
    <ligand>
        <name>serotonin</name>
        <dbReference type="ChEBI" id="CHEBI:350546"/>
    </ligand>
</feature>
<feature type="binding site" evidence="2">
    <location>
        <position position="556"/>
    </location>
    <ligand>
        <name>serotonin</name>
        <dbReference type="ChEBI" id="CHEBI:350546"/>
    </ligand>
</feature>
<feature type="binding site" evidence="2">
    <location>
        <position position="559"/>
    </location>
    <ligand>
        <name>serotonin</name>
        <dbReference type="ChEBI" id="CHEBI:350546"/>
    </ligand>
</feature>
<feature type="modified residue" description="Phosphotyrosine" evidence="2">
    <location>
        <position position="47"/>
    </location>
</feature>
<feature type="modified residue" description="Phosphotyrosine" evidence="2">
    <location>
        <position position="142"/>
    </location>
</feature>
<feature type="modified residue" description="Phosphothreonine" evidence="2">
    <location>
        <position position="276"/>
    </location>
</feature>
<feature type="glycosylation site" description="N-linked (GlcNAc...) asparagine" evidence="2 5">
    <location>
        <position position="208"/>
    </location>
</feature>
<feature type="glycosylation site" description="N-linked (GlcNAc...) asparagine" evidence="2 5">
    <location>
        <position position="217"/>
    </location>
</feature>
<feature type="disulfide bond" evidence="2">
    <location>
        <begin position="200"/>
        <end position="209"/>
    </location>
</feature>
<feature type="sequence conflict" description="In Ref. 1; AAB67172, 2; CAA70092 and 4; AAA84750." evidence="18" ref="1 2 4">
    <original>G</original>
    <variation>E</variation>
    <location>
        <position position="39"/>
    </location>
</feature>
<feature type="sequence conflict" description="In Ref. 1; AAB67172 and 2; CAA70092." evidence="18" ref="1 2">
    <original>K</original>
    <variation>R</variation>
    <location>
        <position position="152"/>
    </location>
</feature>
<feature type="sequence conflict" description="In Ref. 2; CAA70092." evidence="18" ref="2">
    <original>P</original>
    <variation>Q</variation>
    <location>
        <position position="196"/>
    </location>
</feature>
<feature type="sequence conflict" description="In Ref. 2; CAA70092." evidence="18" ref="2">
    <original>A</original>
    <variation>R</variation>
    <location>
        <position position="415"/>
    </location>
</feature>
<keyword id="KW-0050">Antiport</keyword>
<keyword id="KW-0965">Cell junction</keyword>
<keyword id="KW-1003">Cell membrane</keyword>
<keyword id="KW-0966">Cell projection</keyword>
<keyword id="KW-1015">Disulfide bond</keyword>
<keyword id="KW-0967">Endosome</keyword>
<keyword id="KW-0325">Glycoprotein</keyword>
<keyword id="KW-0472">Membrane</keyword>
<keyword id="KW-0479">Metal-binding</keyword>
<keyword id="KW-0532">Neurotransmitter transport</keyword>
<keyword id="KW-0597">Phosphoprotein</keyword>
<keyword id="KW-1185">Reference proteome</keyword>
<keyword id="KW-0915">Sodium</keyword>
<keyword id="KW-0770">Synapse</keyword>
<keyword id="KW-0812">Transmembrane</keyword>
<keyword id="KW-1133">Transmembrane helix</keyword>
<keyword id="KW-0813">Transport</keyword>